<gene>
    <name evidence="5" type="primary">Slc38a7</name>
    <name type="synonym">Snat7</name>
</gene>
<accession>Q6JWR2</accession>
<name>S38A7_RAT</name>
<dbReference type="EMBL" id="AY294328">
    <property type="protein sequence ID" value="AAQ56180.1"/>
    <property type="molecule type" value="mRNA"/>
</dbReference>
<dbReference type="EMBL" id="BC086369">
    <property type="protein sequence ID" value="AAH86369.1"/>
    <property type="molecule type" value="mRNA"/>
</dbReference>
<dbReference type="RefSeq" id="NP_001003705.1">
    <property type="nucleotide sequence ID" value="NM_001003705.3"/>
</dbReference>
<dbReference type="RefSeq" id="NP_001420930.1">
    <property type="nucleotide sequence ID" value="NM_001434001.1"/>
</dbReference>
<dbReference type="RefSeq" id="XP_006255129.1">
    <property type="nucleotide sequence ID" value="XM_006255067.2"/>
</dbReference>
<dbReference type="SMR" id="Q6JWR2"/>
<dbReference type="FunCoup" id="Q6JWR2">
    <property type="interactions" value="195"/>
</dbReference>
<dbReference type="STRING" id="10116.ENSRNOP00000058216"/>
<dbReference type="PhosphoSitePlus" id="Q6JWR2"/>
<dbReference type="PaxDb" id="10116-ENSRNOP00000058216"/>
<dbReference type="Ensembl" id="ENSRNOT00000061498.4">
    <property type="protein sequence ID" value="ENSRNOP00000058216.1"/>
    <property type="gene ID" value="ENSRNOG00000012007.8"/>
</dbReference>
<dbReference type="GeneID" id="291840"/>
<dbReference type="KEGG" id="rno:291840"/>
<dbReference type="UCSC" id="RGD:1303268">
    <property type="organism name" value="rat"/>
</dbReference>
<dbReference type="AGR" id="RGD:1303268"/>
<dbReference type="CTD" id="55238"/>
<dbReference type="RGD" id="1303268">
    <property type="gene designation" value="Slc38a7"/>
</dbReference>
<dbReference type="eggNOG" id="KOG1305">
    <property type="taxonomic scope" value="Eukaryota"/>
</dbReference>
<dbReference type="GeneTree" id="ENSGT00940000158136"/>
<dbReference type="HOGENOM" id="CLU_038973_0_0_1"/>
<dbReference type="InParanoid" id="Q6JWR2"/>
<dbReference type="OMA" id="IRTTSWH"/>
<dbReference type="OrthoDB" id="36563at9989"/>
<dbReference type="PhylomeDB" id="Q6JWR2"/>
<dbReference type="TreeFam" id="TF328787"/>
<dbReference type="PRO" id="PR:Q6JWR2"/>
<dbReference type="Proteomes" id="UP000002494">
    <property type="component" value="Chromosome 19"/>
</dbReference>
<dbReference type="Bgee" id="ENSRNOG00000012007">
    <property type="expression patterns" value="Expressed in skeletal muscle tissue and 18 other cell types or tissues"/>
</dbReference>
<dbReference type="GO" id="GO:0030424">
    <property type="term" value="C:axon"/>
    <property type="evidence" value="ECO:0000250"/>
    <property type="project" value="UniProtKB"/>
</dbReference>
<dbReference type="GO" id="GO:0005765">
    <property type="term" value="C:lysosomal membrane"/>
    <property type="evidence" value="ECO:0000250"/>
    <property type="project" value="UniProtKB"/>
</dbReference>
<dbReference type="GO" id="GO:0016020">
    <property type="term" value="C:membrane"/>
    <property type="evidence" value="ECO:0000318"/>
    <property type="project" value="GO_Central"/>
</dbReference>
<dbReference type="GO" id="GO:0043025">
    <property type="term" value="C:neuronal cell body"/>
    <property type="evidence" value="ECO:0000250"/>
    <property type="project" value="UniProtKB"/>
</dbReference>
<dbReference type="GO" id="GO:0022853">
    <property type="term" value="F:active monoatomic ion transmembrane transporter activity"/>
    <property type="evidence" value="ECO:0007669"/>
    <property type="project" value="UniProtKB-ARBA"/>
</dbReference>
<dbReference type="GO" id="GO:0015182">
    <property type="term" value="F:L-asparagine transmembrane transporter activity"/>
    <property type="evidence" value="ECO:0000318"/>
    <property type="project" value="GO_Central"/>
</dbReference>
<dbReference type="GO" id="GO:0140901">
    <property type="term" value="F:L-asparagine:sodium symporter activity"/>
    <property type="evidence" value="ECO:0000250"/>
    <property type="project" value="UniProtKB"/>
</dbReference>
<dbReference type="GO" id="GO:0015186">
    <property type="term" value="F:L-glutamine transmembrane transporter activity"/>
    <property type="evidence" value="ECO:0000318"/>
    <property type="project" value="GO_Central"/>
</dbReference>
<dbReference type="GO" id="GO:0140902">
    <property type="term" value="F:L-glutamine:sodium symporter activity"/>
    <property type="evidence" value="ECO:0000250"/>
    <property type="project" value="UniProtKB"/>
</dbReference>
<dbReference type="GO" id="GO:0003333">
    <property type="term" value="P:amino acid transmembrane transport"/>
    <property type="evidence" value="ECO:0000318"/>
    <property type="project" value="GO_Central"/>
</dbReference>
<dbReference type="GO" id="GO:0006867">
    <property type="term" value="P:asparagine transport"/>
    <property type="evidence" value="ECO:0000250"/>
    <property type="project" value="UniProtKB"/>
</dbReference>
<dbReference type="GO" id="GO:0006868">
    <property type="term" value="P:glutamine transport"/>
    <property type="evidence" value="ECO:0000250"/>
    <property type="project" value="UniProtKB"/>
</dbReference>
<dbReference type="GO" id="GO:0006814">
    <property type="term" value="P:sodium ion transport"/>
    <property type="evidence" value="ECO:0000250"/>
    <property type="project" value="UniProtKB"/>
</dbReference>
<dbReference type="FunFam" id="1.20.1740.10:FF:000038">
    <property type="entry name" value="Putative sodium-coupled neutral amino acid transporter 7"/>
    <property type="match status" value="1"/>
</dbReference>
<dbReference type="Gene3D" id="1.20.1740.10">
    <property type="entry name" value="Amino acid/polyamine transporter I"/>
    <property type="match status" value="1"/>
</dbReference>
<dbReference type="InterPro" id="IPR013057">
    <property type="entry name" value="AA_transpt_TM"/>
</dbReference>
<dbReference type="PANTHER" id="PTHR22950">
    <property type="entry name" value="AMINO ACID TRANSPORTER"/>
    <property type="match status" value="1"/>
</dbReference>
<dbReference type="PANTHER" id="PTHR22950:SF192">
    <property type="entry name" value="SODIUM-COUPLED NEUTRAL AMINO ACID TRANSPORTER 7"/>
    <property type="match status" value="1"/>
</dbReference>
<dbReference type="Pfam" id="PF01490">
    <property type="entry name" value="Aa_trans"/>
    <property type="match status" value="1"/>
</dbReference>
<reference key="1">
    <citation type="submission" date="2003-05" db="EMBL/GenBank/DDBJ databases">
        <title>A novel amino acid transporter expressed in glutamatergic neurons.</title>
        <authorList>
            <person name="Morris M."/>
            <person name="Varoqui H."/>
            <person name="Erickson J.D."/>
        </authorList>
    </citation>
    <scope>NUCLEOTIDE SEQUENCE [MRNA]</scope>
    <source>
        <strain>Sprague-Dawley</strain>
    </source>
</reference>
<reference key="2">
    <citation type="journal article" date="2004" name="Genome Res.">
        <title>The status, quality, and expansion of the NIH full-length cDNA project: the Mammalian Gene Collection (MGC).</title>
        <authorList>
            <consortium name="The MGC Project Team"/>
        </authorList>
    </citation>
    <scope>NUCLEOTIDE SEQUENCE [LARGE SCALE MRNA]</scope>
    <source>
        <tissue>Kidney</tissue>
    </source>
</reference>
<comment type="function">
    <text evidence="2">Symporter that selectively cotransports sodium ions and amino acids, such as L-glutamine and L-asparagine from the lysosome into the cytoplasm and may participates in mTORC1 activation. The transport activity requires an acidic lysosomal lumen.</text>
</comment>
<comment type="catalytic activity">
    <reaction evidence="2">
        <text>L-asparagine(in) + Na(+)(in) = L-asparagine(out) + Na(+)(out)</text>
        <dbReference type="Rhea" id="RHEA:71383"/>
        <dbReference type="ChEBI" id="CHEBI:29101"/>
        <dbReference type="ChEBI" id="CHEBI:58048"/>
    </reaction>
</comment>
<comment type="catalytic activity">
    <reaction evidence="2">
        <text>L-glutamine(in) + Na(+)(in) = L-glutamine(out) + Na(+)(out)</text>
        <dbReference type="Rhea" id="RHEA:68236"/>
        <dbReference type="ChEBI" id="CHEBI:29101"/>
        <dbReference type="ChEBI" id="CHEBI:58359"/>
    </reaction>
</comment>
<comment type="subunit">
    <text evidence="2">Interacts with the mTORC1 complex; this interaction mediates the recruitment of mTORC1 to the lysosome and its subsequent activation.</text>
</comment>
<comment type="subcellular location">
    <subcellularLocation>
        <location evidence="2">Lysosome membrane</location>
        <topology evidence="3">Multi-pass membrane protein</topology>
    </subcellularLocation>
    <subcellularLocation>
        <location evidence="1">Cell projection</location>
        <location evidence="1">Axon</location>
    </subcellularLocation>
    <text evidence="1">In neurons, located in soma.</text>
</comment>
<comment type="similarity">
    <text evidence="4">Belongs to the amino acid/polyamine transporter 2 family.</text>
</comment>
<evidence type="ECO:0000250" key="1">
    <source>
        <dbReference type="UniProtKB" id="Q8BWH0"/>
    </source>
</evidence>
<evidence type="ECO:0000250" key="2">
    <source>
        <dbReference type="UniProtKB" id="Q9NVC3"/>
    </source>
</evidence>
<evidence type="ECO:0000255" key="3"/>
<evidence type="ECO:0000305" key="4"/>
<evidence type="ECO:0000312" key="5">
    <source>
        <dbReference type="RGD" id="1303268"/>
    </source>
</evidence>
<proteinExistence type="evidence at transcript level"/>
<feature type="chain" id="PRO_0000319600" description="Sodium-coupled neutral amino acid transporter 7">
    <location>
        <begin position="1"/>
        <end position="463"/>
    </location>
</feature>
<feature type="transmembrane region" description="Helical" evidence="3">
    <location>
        <begin position="56"/>
        <end position="76"/>
    </location>
</feature>
<feature type="transmembrane region" description="Helical" evidence="3">
    <location>
        <begin position="82"/>
        <end position="102"/>
    </location>
</feature>
<feature type="transmembrane region" description="Helical" evidence="3">
    <location>
        <begin position="130"/>
        <end position="150"/>
    </location>
</feature>
<feature type="transmembrane region" description="Helical" evidence="3">
    <location>
        <begin position="179"/>
        <end position="199"/>
    </location>
</feature>
<feature type="transmembrane region" description="Helical" evidence="3">
    <location>
        <begin position="206"/>
        <end position="226"/>
    </location>
</feature>
<feature type="transmembrane region" description="Helical" evidence="3">
    <location>
        <begin position="240"/>
        <end position="260"/>
    </location>
</feature>
<feature type="transmembrane region" description="Helical" evidence="3">
    <location>
        <begin position="283"/>
        <end position="303"/>
    </location>
</feature>
<feature type="transmembrane region" description="Helical" evidence="3">
    <location>
        <begin position="320"/>
        <end position="340"/>
    </location>
</feature>
<feature type="transmembrane region" description="Helical" evidence="3">
    <location>
        <begin position="372"/>
        <end position="392"/>
    </location>
</feature>
<feature type="transmembrane region" description="Helical" evidence="3">
    <location>
        <begin position="396"/>
        <end position="416"/>
    </location>
</feature>
<feature type="transmembrane region" description="Helical" evidence="3">
    <location>
        <begin position="429"/>
        <end position="449"/>
    </location>
</feature>
<feature type="modified residue" description="Phosphoserine" evidence="2">
    <location>
        <position position="28"/>
    </location>
</feature>
<protein>
    <recommendedName>
        <fullName evidence="4">Sodium-coupled neutral amino acid transporter 7</fullName>
    </recommendedName>
    <alternativeName>
        <fullName>Solute carrier family 38 member 7</fullName>
    </alternativeName>
</protein>
<sequence>MAQVSINSDYSEWGSSTDAGERARLLQSPCVDVVPKREGEASPGDPDSGTTSTLGAVFIVVNACLGAGLLNFPAAFSTAGGVAAGIALQMGMLVFIISGLVILAYCSQASNERTYQEVVWAVCGKLTGVLCEIAIAVYTFGTCIAFLIIIGDQQDKIIAVMAKEPDGASGSPWYTDRKFTISLTAFLFILPLSIPKEIGFQKYASSLSVVGTWYVTAIVIIKYIWPDKEMRPGDILTRPASWMAVFNAMPTICFGFQCHVSSVPVFNSMRQPQVKTWGGVVTAAMVIALAVYMGTGICGFLTFGAAVDPDVLRSYPSEDVAVAVARAFIILSVLTSYPILHFCGRAVVEGLWLRYKGTPVEEDVGRERRRRVLQTLVWFLLTLLLALFIPDIGKVISVIGGLAACFIFIFPGLCLIQAKLSEMEEVKPASWWALVSYGVLLVTLGAFIFGQTTANAVFVDLLA</sequence>
<keyword id="KW-0029">Amino-acid transport</keyword>
<keyword id="KW-0966">Cell projection</keyword>
<keyword id="KW-0406">Ion transport</keyword>
<keyword id="KW-0458">Lysosome</keyword>
<keyword id="KW-0472">Membrane</keyword>
<keyword id="KW-0597">Phosphoprotein</keyword>
<keyword id="KW-1185">Reference proteome</keyword>
<keyword id="KW-0915">Sodium</keyword>
<keyword id="KW-0739">Sodium transport</keyword>
<keyword id="KW-0812">Transmembrane</keyword>
<keyword id="KW-1133">Transmembrane helix</keyword>
<keyword id="KW-0813">Transport</keyword>
<organism>
    <name type="scientific">Rattus norvegicus</name>
    <name type="common">Rat</name>
    <dbReference type="NCBI Taxonomy" id="10116"/>
    <lineage>
        <taxon>Eukaryota</taxon>
        <taxon>Metazoa</taxon>
        <taxon>Chordata</taxon>
        <taxon>Craniata</taxon>
        <taxon>Vertebrata</taxon>
        <taxon>Euteleostomi</taxon>
        <taxon>Mammalia</taxon>
        <taxon>Eutheria</taxon>
        <taxon>Euarchontoglires</taxon>
        <taxon>Glires</taxon>
        <taxon>Rodentia</taxon>
        <taxon>Myomorpha</taxon>
        <taxon>Muroidea</taxon>
        <taxon>Muridae</taxon>
        <taxon>Murinae</taxon>
        <taxon>Rattus</taxon>
    </lineage>
</organism>